<protein>
    <recommendedName>
        <fullName evidence="1">NAD kinase</fullName>
        <ecNumber evidence="1">2.7.1.23</ecNumber>
    </recommendedName>
    <alternativeName>
        <fullName evidence="1">ATP-dependent NAD kinase</fullName>
    </alternativeName>
</protein>
<sequence>MTSRANATSPFKTVALVGRYSAANIAAPLLELASCIAARGHDIVFERETALNIGVQDYPALPPDEMARHADVAVVLGGDGTLLGIGRHLAGASVPVIGVNHGRLGFMTDIPFEDVHNVLPDMLAGQYEAETRSLLQAQVVRDDETIFSALAFNDVVVNRSGFSGMVELAVSVDGFFMYNQRSDGLIVSTPTGSTAYALSAGGPILHPALSGLVLVPIAPHALSNRPIVIPHDAEVVIQVTSGRDASVNFDMQSLTSLLPGDRIVVRRSERTVRLLHPVGYNYYATLRKKLHWHEYPTEDNRL</sequence>
<keyword id="KW-0067">ATP-binding</keyword>
<keyword id="KW-0963">Cytoplasm</keyword>
<keyword id="KW-0418">Kinase</keyword>
<keyword id="KW-0520">NAD</keyword>
<keyword id="KW-0521">NADP</keyword>
<keyword id="KW-0547">Nucleotide-binding</keyword>
<keyword id="KW-1185">Reference proteome</keyword>
<keyword id="KW-0808">Transferase</keyword>
<reference key="1">
    <citation type="journal article" date="2002" name="Nature">
        <title>Genome sequence of the plant pathogen Ralstonia solanacearum.</title>
        <authorList>
            <person name="Salanoubat M."/>
            <person name="Genin S."/>
            <person name="Artiguenave F."/>
            <person name="Gouzy J."/>
            <person name="Mangenot S."/>
            <person name="Arlat M."/>
            <person name="Billault A."/>
            <person name="Brottier P."/>
            <person name="Camus J.-C."/>
            <person name="Cattolico L."/>
            <person name="Chandler M."/>
            <person name="Choisne N."/>
            <person name="Claudel-Renard C."/>
            <person name="Cunnac S."/>
            <person name="Demange N."/>
            <person name="Gaspin C."/>
            <person name="Lavie M."/>
            <person name="Moisan A."/>
            <person name="Robert C."/>
            <person name="Saurin W."/>
            <person name="Schiex T."/>
            <person name="Siguier P."/>
            <person name="Thebault P."/>
            <person name="Whalen M."/>
            <person name="Wincker P."/>
            <person name="Levy M."/>
            <person name="Weissenbach J."/>
            <person name="Boucher C.A."/>
        </authorList>
    </citation>
    <scope>NUCLEOTIDE SEQUENCE [LARGE SCALE GENOMIC DNA]</scope>
    <source>
        <strain>ATCC BAA-1114 / GMI1000</strain>
    </source>
</reference>
<feature type="chain" id="PRO_0000120649" description="NAD kinase">
    <location>
        <begin position="1"/>
        <end position="302"/>
    </location>
</feature>
<feature type="active site" description="Proton acceptor" evidence="1">
    <location>
        <position position="79"/>
    </location>
</feature>
<feature type="binding site" evidence="1">
    <location>
        <begin position="79"/>
        <end position="80"/>
    </location>
    <ligand>
        <name>NAD(+)</name>
        <dbReference type="ChEBI" id="CHEBI:57540"/>
    </ligand>
</feature>
<feature type="binding site" evidence="1">
    <location>
        <begin position="153"/>
        <end position="154"/>
    </location>
    <ligand>
        <name>NAD(+)</name>
        <dbReference type="ChEBI" id="CHEBI:57540"/>
    </ligand>
</feature>
<feature type="binding site" evidence="1">
    <location>
        <position position="181"/>
    </location>
    <ligand>
        <name>NAD(+)</name>
        <dbReference type="ChEBI" id="CHEBI:57540"/>
    </ligand>
</feature>
<feature type="binding site" evidence="1">
    <location>
        <position position="183"/>
    </location>
    <ligand>
        <name>NAD(+)</name>
        <dbReference type="ChEBI" id="CHEBI:57540"/>
    </ligand>
</feature>
<feature type="binding site" evidence="1">
    <location>
        <begin position="194"/>
        <end position="199"/>
    </location>
    <ligand>
        <name>NAD(+)</name>
        <dbReference type="ChEBI" id="CHEBI:57540"/>
    </ligand>
</feature>
<feature type="binding site" evidence="1">
    <location>
        <position position="218"/>
    </location>
    <ligand>
        <name>NAD(+)</name>
        <dbReference type="ChEBI" id="CHEBI:57540"/>
    </ligand>
</feature>
<feature type="binding site" evidence="1">
    <location>
        <position position="252"/>
    </location>
    <ligand>
        <name>NAD(+)</name>
        <dbReference type="ChEBI" id="CHEBI:57540"/>
    </ligand>
</feature>
<dbReference type="EC" id="2.7.1.23" evidence="1"/>
<dbReference type="EMBL" id="AL646052">
    <property type="protein sequence ID" value="CAD16357.1"/>
    <property type="molecule type" value="Genomic_DNA"/>
</dbReference>
<dbReference type="SMR" id="Q8XW25"/>
<dbReference type="STRING" id="267608.RSc2650"/>
<dbReference type="EnsemblBacteria" id="CAD16357">
    <property type="protein sequence ID" value="CAD16357"/>
    <property type="gene ID" value="RSc2650"/>
</dbReference>
<dbReference type="KEGG" id="rso:RSc2650"/>
<dbReference type="eggNOG" id="COG0061">
    <property type="taxonomic scope" value="Bacteria"/>
</dbReference>
<dbReference type="HOGENOM" id="CLU_008831_0_1_4"/>
<dbReference type="Proteomes" id="UP000001436">
    <property type="component" value="Chromosome"/>
</dbReference>
<dbReference type="GO" id="GO:0005737">
    <property type="term" value="C:cytoplasm"/>
    <property type="evidence" value="ECO:0007669"/>
    <property type="project" value="UniProtKB-SubCell"/>
</dbReference>
<dbReference type="GO" id="GO:0005524">
    <property type="term" value="F:ATP binding"/>
    <property type="evidence" value="ECO:0007669"/>
    <property type="project" value="UniProtKB-KW"/>
</dbReference>
<dbReference type="GO" id="GO:0046872">
    <property type="term" value="F:metal ion binding"/>
    <property type="evidence" value="ECO:0007669"/>
    <property type="project" value="UniProtKB-UniRule"/>
</dbReference>
<dbReference type="GO" id="GO:0051287">
    <property type="term" value="F:NAD binding"/>
    <property type="evidence" value="ECO:0007669"/>
    <property type="project" value="UniProtKB-ARBA"/>
</dbReference>
<dbReference type="GO" id="GO:0003951">
    <property type="term" value="F:NAD+ kinase activity"/>
    <property type="evidence" value="ECO:0007669"/>
    <property type="project" value="UniProtKB-UniRule"/>
</dbReference>
<dbReference type="GO" id="GO:0019674">
    <property type="term" value="P:NAD metabolic process"/>
    <property type="evidence" value="ECO:0007669"/>
    <property type="project" value="InterPro"/>
</dbReference>
<dbReference type="GO" id="GO:0006741">
    <property type="term" value="P:NADP biosynthetic process"/>
    <property type="evidence" value="ECO:0007669"/>
    <property type="project" value="UniProtKB-UniRule"/>
</dbReference>
<dbReference type="Gene3D" id="3.40.50.10330">
    <property type="entry name" value="Probable inorganic polyphosphate/atp-NAD kinase, domain 1"/>
    <property type="match status" value="1"/>
</dbReference>
<dbReference type="Gene3D" id="2.60.200.30">
    <property type="entry name" value="Probable inorganic polyphosphate/atp-NAD kinase, domain 2"/>
    <property type="match status" value="1"/>
</dbReference>
<dbReference type="HAMAP" id="MF_00361">
    <property type="entry name" value="NAD_kinase"/>
    <property type="match status" value="1"/>
</dbReference>
<dbReference type="InterPro" id="IPR017438">
    <property type="entry name" value="ATP-NAD_kinase_N"/>
</dbReference>
<dbReference type="InterPro" id="IPR017437">
    <property type="entry name" value="ATP-NAD_kinase_PpnK-typ_C"/>
</dbReference>
<dbReference type="InterPro" id="IPR016064">
    <property type="entry name" value="NAD/diacylglycerol_kinase_sf"/>
</dbReference>
<dbReference type="InterPro" id="IPR002504">
    <property type="entry name" value="NADK"/>
</dbReference>
<dbReference type="NCBIfam" id="NF002306">
    <property type="entry name" value="PRK01231.1"/>
    <property type="match status" value="1"/>
</dbReference>
<dbReference type="NCBIfam" id="NF002561">
    <property type="entry name" value="PRK02155.1"/>
    <property type="match status" value="1"/>
</dbReference>
<dbReference type="PANTHER" id="PTHR20275">
    <property type="entry name" value="NAD KINASE"/>
    <property type="match status" value="1"/>
</dbReference>
<dbReference type="PANTHER" id="PTHR20275:SF0">
    <property type="entry name" value="NAD KINASE"/>
    <property type="match status" value="1"/>
</dbReference>
<dbReference type="Pfam" id="PF01513">
    <property type="entry name" value="NAD_kinase"/>
    <property type="match status" value="1"/>
</dbReference>
<dbReference type="Pfam" id="PF20143">
    <property type="entry name" value="NAD_kinase_C"/>
    <property type="match status" value="1"/>
</dbReference>
<dbReference type="SUPFAM" id="SSF111331">
    <property type="entry name" value="NAD kinase/diacylglycerol kinase-like"/>
    <property type="match status" value="1"/>
</dbReference>
<accession>Q8XW25</accession>
<name>NADK_RALN1</name>
<proteinExistence type="inferred from homology"/>
<evidence type="ECO:0000255" key="1">
    <source>
        <dbReference type="HAMAP-Rule" id="MF_00361"/>
    </source>
</evidence>
<organism>
    <name type="scientific">Ralstonia nicotianae (strain ATCC BAA-1114 / GMI1000)</name>
    <name type="common">Ralstonia solanacearum</name>
    <dbReference type="NCBI Taxonomy" id="267608"/>
    <lineage>
        <taxon>Bacteria</taxon>
        <taxon>Pseudomonadati</taxon>
        <taxon>Pseudomonadota</taxon>
        <taxon>Betaproteobacteria</taxon>
        <taxon>Burkholderiales</taxon>
        <taxon>Burkholderiaceae</taxon>
        <taxon>Ralstonia</taxon>
        <taxon>Ralstonia solanacearum species complex</taxon>
    </lineage>
</organism>
<gene>
    <name evidence="1" type="primary">nadK</name>
    <name type="ordered locus">RSc2650</name>
    <name type="ORF">RS04566</name>
</gene>
<comment type="function">
    <text evidence="1">Involved in the regulation of the intracellular balance of NAD and NADP, and is a key enzyme in the biosynthesis of NADP. Catalyzes specifically the phosphorylation on 2'-hydroxyl of the adenosine moiety of NAD to yield NADP.</text>
</comment>
<comment type="catalytic activity">
    <reaction evidence="1">
        <text>NAD(+) + ATP = ADP + NADP(+) + H(+)</text>
        <dbReference type="Rhea" id="RHEA:18629"/>
        <dbReference type="ChEBI" id="CHEBI:15378"/>
        <dbReference type="ChEBI" id="CHEBI:30616"/>
        <dbReference type="ChEBI" id="CHEBI:57540"/>
        <dbReference type="ChEBI" id="CHEBI:58349"/>
        <dbReference type="ChEBI" id="CHEBI:456216"/>
        <dbReference type="EC" id="2.7.1.23"/>
    </reaction>
</comment>
<comment type="cofactor">
    <cofactor evidence="1">
        <name>a divalent metal cation</name>
        <dbReference type="ChEBI" id="CHEBI:60240"/>
    </cofactor>
</comment>
<comment type="subcellular location">
    <subcellularLocation>
        <location evidence="1">Cytoplasm</location>
    </subcellularLocation>
</comment>
<comment type="similarity">
    <text evidence="1">Belongs to the NAD kinase family.</text>
</comment>